<keyword id="KW-0964">Secreted</keyword>
<keyword id="KW-0843">Virulence</keyword>
<accession>A0A0H2XDF9</accession>
<reference key="1">
    <citation type="journal article" date="2006" name="Lancet">
        <title>Complete genome sequence of USA300, an epidemic clone of community-acquired meticillin-resistant Staphylococcus aureus.</title>
        <authorList>
            <person name="Diep B.A."/>
            <person name="Gill S.R."/>
            <person name="Chang R.F."/>
            <person name="Phan T.H."/>
            <person name="Chen J.H."/>
            <person name="Davidson M.G."/>
            <person name="Lin F."/>
            <person name="Lin J."/>
            <person name="Carleton H.A."/>
            <person name="Mongodin E.F."/>
            <person name="Sensabaugh G.F."/>
            <person name="Perdreau-Remington F."/>
        </authorList>
    </citation>
    <scope>NUCLEOTIDE SEQUENCE [LARGE SCALE GENOMIC DNA]</scope>
    <source>
        <strain>USA300</strain>
    </source>
</reference>
<reference key="2">
    <citation type="journal article" date="2013" name="Mol. Microbiol.">
        <title>Secretion of atypical protein substrates by the ESAT-6 secretion system of Staphylococcus aureus.</title>
        <authorList>
            <person name="Anderson M."/>
            <person name="Aly K.A."/>
            <person name="Chen Y.H."/>
            <person name="Missiakas D."/>
        </authorList>
    </citation>
    <scope>SUBUNIT</scope>
    <scope>SUBCELLULAR LOCATION</scope>
    <scope>DISRUPTION PHENOTYPE</scope>
    <source>
        <strain>USA300</strain>
    </source>
</reference>
<comment type="subunit">
    <text evidence="1">Forms heterodimers with EsxB.</text>
</comment>
<comment type="subcellular location">
    <subcellularLocation>
        <location evidence="1">Secreted</location>
    </subcellularLocation>
    <text evidence="3">Secreted via the ESAT-6 secretion system (Ess) / type VII secretion system (T7SS).</text>
</comment>
<comment type="disruption phenotype">
    <text evidence="1">Deletion abrogates the production of EsxB and affects the secretion, but not the production, of EsxA and EsxC.</text>
</comment>
<proteinExistence type="evidence at protein level"/>
<dbReference type="EMBL" id="CP000255">
    <property type="protein sequence ID" value="ABD20409.1"/>
    <property type="molecule type" value="Genomic_DNA"/>
</dbReference>
<dbReference type="RefSeq" id="WP_000175722.1">
    <property type="nucleotide sequence ID" value="NZ_CP027476.1"/>
</dbReference>
<dbReference type="SMR" id="A0A0H2XDF9"/>
<dbReference type="GeneID" id="66838594"/>
<dbReference type="KEGG" id="saa:SAUSA300_0287"/>
<dbReference type="HOGENOM" id="CLU_178577_0_0_9"/>
<dbReference type="OMA" id="ADEHWGA"/>
<dbReference type="Proteomes" id="UP000001939">
    <property type="component" value="Chromosome"/>
</dbReference>
<dbReference type="GO" id="GO:0005576">
    <property type="term" value="C:extracellular region"/>
    <property type="evidence" value="ECO:0007669"/>
    <property type="project" value="UniProtKB-SubCell"/>
</dbReference>
<sequence>MTLSGKISVKAETIAHVVKELESISQKYDEIAQNFGKIAQLNYYSSEKAAHSMENGYSSAATVISGLKGPLSTLGGGVMNSAQKFFEADEHWGTEFAKLYYNIEG</sequence>
<organism>
    <name type="scientific">Staphylococcus aureus (strain USA300)</name>
    <dbReference type="NCBI Taxonomy" id="367830"/>
    <lineage>
        <taxon>Bacteria</taxon>
        <taxon>Bacillati</taxon>
        <taxon>Bacillota</taxon>
        <taxon>Bacilli</taxon>
        <taxon>Bacillales</taxon>
        <taxon>Staphylococcaceae</taxon>
        <taxon>Staphylococcus</taxon>
    </lineage>
</organism>
<gene>
    <name evidence="2" type="primary">esxD</name>
    <name evidence="4" type="ordered locus">SAUSA300_0287</name>
</gene>
<feature type="chain" id="PRO_0000437376" description="Type VII secretion system extracellular protein D">
    <location>
        <begin position="1"/>
        <end position="105"/>
    </location>
</feature>
<name>ESXD_STAA3</name>
<evidence type="ECO:0000269" key="1">
    <source>
    </source>
</evidence>
<evidence type="ECO:0000303" key="2">
    <source>
    </source>
</evidence>
<evidence type="ECO:0000305" key="3"/>
<evidence type="ECO:0000312" key="4">
    <source>
        <dbReference type="EMBL" id="ABD20409.1"/>
    </source>
</evidence>
<protein>
    <recommendedName>
        <fullName evidence="3">Type VII secretion system extracellular protein D</fullName>
        <shortName evidence="3">Ess extracellular protein D</shortName>
    </recommendedName>
</protein>